<reference key="1">
    <citation type="journal article" date="1991" name="Dokl. Akad. Nauk SSSR">
        <title>Creation of a clone library of fragments from the natural variola virus and study of the structural and functional organization of viral genes from a circle of hosts.</title>
        <authorList>
            <person name="Shchelkunov S.N."/>
            <person name="Marennikova S.S."/>
            <person name="Totmenin A.V."/>
            <person name="Blinov V.M."/>
            <person name="Chizhikov V.E."/>
            <person name="Gutorov V.V."/>
            <person name="Safronov P.F."/>
            <person name="Pozdnyakov S.G."/>
            <person name="Shelukhina E.M."/>
            <person name="Gashnikov P.V."/>
            <person name="Anjaparidze O.G."/>
            <person name="Sandakhchiev L.S."/>
        </authorList>
    </citation>
    <scope>NUCLEOTIDE SEQUENCE [GENOMIC DNA]</scope>
</reference>
<reference key="2">
    <citation type="journal article" date="1993" name="FEBS Lett.">
        <title>Genes of variola and vaccinia viruses necessary to overcome the host protective mechanisms.</title>
        <authorList>
            <person name="Shchelkunov S.N."/>
            <person name="Blinov V.M."/>
            <person name="Sandakhchiev L.S."/>
        </authorList>
    </citation>
    <scope>NUCLEOTIDE SEQUENCE [LARGE SCALE GENOMIC DNA]</scope>
</reference>
<protein>
    <recommendedName>
        <fullName>DNA-directed RNA polymerase 19 kDa subunit</fullName>
        <ecNumber>2.7.7.6</ecNumber>
    </recommendedName>
</protein>
<dbReference type="EC" id="2.7.7.6"/>
<dbReference type="EMBL" id="X69198">
    <property type="protein sequence ID" value="CAA49050.1"/>
    <property type="molecule type" value="Genomic_DNA"/>
</dbReference>
<dbReference type="EMBL" id="X67116">
    <property type="protein sequence ID" value="CAA47518.1"/>
    <property type="molecule type" value="Genomic_DNA"/>
</dbReference>
<dbReference type="PIR" id="F36848">
    <property type="entry name" value="F36848"/>
</dbReference>
<dbReference type="RefSeq" id="NP_042153.1">
    <property type="nucleotide sequence ID" value="NC_001611.1"/>
</dbReference>
<dbReference type="SMR" id="P33813"/>
<dbReference type="GeneID" id="1486535"/>
<dbReference type="KEGG" id="vg:1486535"/>
<dbReference type="Proteomes" id="UP000002060">
    <property type="component" value="Segment"/>
</dbReference>
<dbReference type="GO" id="GO:0000428">
    <property type="term" value="C:DNA-directed RNA polymerase complex"/>
    <property type="evidence" value="ECO:0007669"/>
    <property type="project" value="UniProtKB-KW"/>
</dbReference>
<dbReference type="GO" id="GO:0044423">
    <property type="term" value="C:virion component"/>
    <property type="evidence" value="ECO:0007669"/>
    <property type="project" value="UniProtKB-KW"/>
</dbReference>
<dbReference type="GO" id="GO:0003677">
    <property type="term" value="F:DNA binding"/>
    <property type="evidence" value="ECO:0007669"/>
    <property type="project" value="InterPro"/>
</dbReference>
<dbReference type="GO" id="GO:0003899">
    <property type="term" value="F:DNA-directed RNA polymerase activity"/>
    <property type="evidence" value="ECO:0007669"/>
    <property type="project" value="UniProtKB-EC"/>
</dbReference>
<dbReference type="GO" id="GO:0006351">
    <property type="term" value="P:DNA-templated transcription"/>
    <property type="evidence" value="ECO:0007669"/>
    <property type="project" value="InterPro"/>
</dbReference>
<dbReference type="Gene3D" id="3.90.940.10">
    <property type="match status" value="1"/>
</dbReference>
<dbReference type="InterPro" id="IPR007984">
    <property type="entry name" value="DNA-dir_RNA_Pol_19kDa_poxvir"/>
</dbReference>
<dbReference type="InterPro" id="IPR036161">
    <property type="entry name" value="RPB6/omega-like_sf"/>
</dbReference>
<dbReference type="Pfam" id="PF05320">
    <property type="entry name" value="Pox_RNA_Pol_19"/>
    <property type="match status" value="1"/>
</dbReference>
<dbReference type="PIRSF" id="PIRSF000743">
    <property type="entry name" value="RPO19"/>
    <property type="match status" value="1"/>
</dbReference>
<name>RP19_VAR67</name>
<gene>
    <name type="primary">OPG131</name>
    <name type="synonym">RPO19</name>
    <name type="ORF">A5R</name>
</gene>
<feature type="chain" id="PRO_0000099148" description="DNA-directed RNA polymerase 19 kDa subunit">
    <location>
        <begin position="1"/>
        <end position="164"/>
    </location>
</feature>
<feature type="region of interest" description="Disordered" evidence="2">
    <location>
        <begin position="1"/>
        <end position="39"/>
    </location>
</feature>
<feature type="compositionally biased region" description="Acidic residues" evidence="2">
    <location>
        <begin position="1"/>
        <end position="35"/>
    </location>
</feature>
<comment type="function">
    <text evidence="1">Part of the DNA-dependent RNA polymerase which catalyzes the transcription of viral DNA into RNA using the four ribonucleoside triphosphates as substrates. Responsible for the transcription of early, intermediate and late genes. DNA-dependent RNA polymerase associates with the early transcription factor (ETF), itself composed of OPG118 and OPG133, thereby allowing the early genes transcription. Late transcription, and probably also intermediate transcription, require newly synthesized RNA polymerase.</text>
</comment>
<comment type="catalytic activity">
    <reaction>
        <text>RNA(n) + a ribonucleoside 5'-triphosphate = RNA(n+1) + diphosphate</text>
        <dbReference type="Rhea" id="RHEA:21248"/>
        <dbReference type="Rhea" id="RHEA-COMP:14527"/>
        <dbReference type="Rhea" id="RHEA-COMP:17342"/>
        <dbReference type="ChEBI" id="CHEBI:33019"/>
        <dbReference type="ChEBI" id="CHEBI:61557"/>
        <dbReference type="ChEBI" id="CHEBI:140395"/>
        <dbReference type="EC" id="2.7.7.6"/>
    </reaction>
</comment>
<comment type="subunit">
    <text evidence="1">The DNA-dependent RNA polymerase used for intermediate and late genes expression consists of eight subunits Rpo30/OPG66, Rpo7/OPG90, Rpo22/OPG103, Rpo147/OPG105, Rpo18/OPG119, Rpo19/OPG131, Rpo132/OPG151 and Rpo35/OPG156. The same holoenzyme, with the addition of the transcription-specificity factor OPG109, is used for early gene expression.</text>
</comment>
<comment type="subcellular location">
    <subcellularLocation>
        <location evidence="1">Virion</location>
    </subcellularLocation>
    <text evidence="1">All the enzymes and other proteins required to synthesize early mRNAs are packaged within the virion core along with the DNA genome. This is necessary because viral early mRNAs are synthesized within minutes after virus entry into the cell and are extruded through pores in the core particle.</text>
</comment>
<comment type="induction">
    <text>Expressed in the early phase of the viral replicative cycle. Expression seems to continue throughout virus infection.</text>
</comment>
<comment type="similarity">
    <text evidence="3">Belongs to the poxviridae DNA-directed RNA polymerase 19 kDa subunit family.</text>
</comment>
<keyword id="KW-0240">DNA-directed RNA polymerase</keyword>
<keyword id="KW-0244">Early protein</keyword>
<keyword id="KW-0548">Nucleotidyltransferase</keyword>
<keyword id="KW-1185">Reference proteome</keyword>
<keyword id="KW-0804">Transcription</keyword>
<keyword id="KW-0808">Transferase</keyword>
<keyword id="KW-0946">Virion</keyword>
<proteinExistence type="evidence at transcript level"/>
<evidence type="ECO:0000250" key="1">
    <source>
        <dbReference type="UniProtKB" id="Q76ZQ8"/>
    </source>
</evidence>
<evidence type="ECO:0000256" key="2">
    <source>
        <dbReference type="SAM" id="MobiDB-lite"/>
    </source>
</evidence>
<evidence type="ECO:0000305" key="3"/>
<accession>P33813</accession>
<sequence>MADTDDIIDYESDDLTEYEDDDEEEEDGESLETSDIDPKSSYKIVESASTHIEDAHSNLKHIGNHISALKRRYTRRISLFEIAGIIAESYNLLQRGRLPLVSEFSNETMKQNMLHVIIQEIEEGSCPIVIEKNGELLSVNDFDKDGLKFHLDYIIKIWKLQKRY</sequence>
<organism>
    <name type="scientific">Variola virus (isolate Human/India/Ind3/1967)</name>
    <name type="common">VARV</name>
    <name type="synonym">Smallpox virus</name>
    <dbReference type="NCBI Taxonomy" id="587200"/>
    <lineage>
        <taxon>Viruses</taxon>
        <taxon>Varidnaviria</taxon>
        <taxon>Bamfordvirae</taxon>
        <taxon>Nucleocytoviricota</taxon>
        <taxon>Pokkesviricetes</taxon>
        <taxon>Chitovirales</taxon>
        <taxon>Poxviridae</taxon>
        <taxon>Chordopoxvirinae</taxon>
        <taxon>Orthopoxvirus</taxon>
        <taxon>Variola virus</taxon>
    </lineage>
</organism>
<organismHost>
    <name type="scientific">Homo sapiens</name>
    <name type="common">Human</name>
    <dbReference type="NCBI Taxonomy" id="9606"/>
</organismHost>